<evidence type="ECO:0000255" key="1">
    <source>
        <dbReference type="HAMAP-Rule" id="MF_00151"/>
    </source>
</evidence>
<feature type="chain" id="PRO_0000156212" description="Phosphopantetheine adenylyltransferase">
    <location>
        <begin position="1"/>
        <end position="164"/>
    </location>
</feature>
<feature type="binding site" evidence="1">
    <location>
        <begin position="11"/>
        <end position="12"/>
    </location>
    <ligand>
        <name>ATP</name>
        <dbReference type="ChEBI" id="CHEBI:30616"/>
    </ligand>
</feature>
<feature type="binding site" evidence="1">
    <location>
        <position position="11"/>
    </location>
    <ligand>
        <name>substrate</name>
    </ligand>
</feature>
<feature type="binding site" evidence="1">
    <location>
        <position position="19"/>
    </location>
    <ligand>
        <name>ATP</name>
        <dbReference type="ChEBI" id="CHEBI:30616"/>
    </ligand>
</feature>
<feature type="binding site" evidence="1">
    <location>
        <position position="43"/>
    </location>
    <ligand>
        <name>substrate</name>
    </ligand>
</feature>
<feature type="binding site" evidence="1">
    <location>
        <position position="75"/>
    </location>
    <ligand>
        <name>substrate</name>
    </ligand>
</feature>
<feature type="binding site" evidence="1">
    <location>
        <position position="89"/>
    </location>
    <ligand>
        <name>substrate</name>
    </ligand>
</feature>
<feature type="binding site" evidence="1">
    <location>
        <begin position="90"/>
        <end position="92"/>
    </location>
    <ligand>
        <name>ATP</name>
        <dbReference type="ChEBI" id="CHEBI:30616"/>
    </ligand>
</feature>
<feature type="binding site" evidence="1">
    <location>
        <position position="100"/>
    </location>
    <ligand>
        <name>ATP</name>
        <dbReference type="ChEBI" id="CHEBI:30616"/>
    </ligand>
</feature>
<feature type="binding site" evidence="1">
    <location>
        <begin position="125"/>
        <end position="131"/>
    </location>
    <ligand>
        <name>ATP</name>
        <dbReference type="ChEBI" id="CHEBI:30616"/>
    </ligand>
</feature>
<feature type="site" description="Transition state stabilizer" evidence="1">
    <location>
        <position position="19"/>
    </location>
</feature>
<comment type="function">
    <text evidence="1">Reversibly transfers an adenylyl group from ATP to 4'-phosphopantetheine, yielding dephospho-CoA (dPCoA) and pyrophosphate.</text>
</comment>
<comment type="catalytic activity">
    <reaction evidence="1">
        <text>(R)-4'-phosphopantetheine + ATP + H(+) = 3'-dephospho-CoA + diphosphate</text>
        <dbReference type="Rhea" id="RHEA:19801"/>
        <dbReference type="ChEBI" id="CHEBI:15378"/>
        <dbReference type="ChEBI" id="CHEBI:30616"/>
        <dbReference type="ChEBI" id="CHEBI:33019"/>
        <dbReference type="ChEBI" id="CHEBI:57328"/>
        <dbReference type="ChEBI" id="CHEBI:61723"/>
        <dbReference type="EC" id="2.7.7.3"/>
    </reaction>
</comment>
<comment type="cofactor">
    <cofactor evidence="1">
        <name>Mg(2+)</name>
        <dbReference type="ChEBI" id="CHEBI:18420"/>
    </cofactor>
</comment>
<comment type="pathway">
    <text evidence="1">Cofactor biosynthesis; coenzyme A biosynthesis; CoA from (R)-pantothenate: step 4/5.</text>
</comment>
<comment type="subunit">
    <text evidence="1">Homohexamer.</text>
</comment>
<comment type="subcellular location">
    <subcellularLocation>
        <location evidence="1">Cytoplasm</location>
    </subcellularLocation>
</comment>
<comment type="similarity">
    <text evidence="1">Belongs to the bacterial CoaD family.</text>
</comment>
<organism>
    <name type="scientific">Geobacter sulfurreducens (strain ATCC 51573 / DSM 12127 / PCA)</name>
    <dbReference type="NCBI Taxonomy" id="243231"/>
    <lineage>
        <taxon>Bacteria</taxon>
        <taxon>Pseudomonadati</taxon>
        <taxon>Thermodesulfobacteriota</taxon>
        <taxon>Desulfuromonadia</taxon>
        <taxon>Geobacterales</taxon>
        <taxon>Geobacteraceae</taxon>
        <taxon>Geobacter</taxon>
    </lineage>
</organism>
<reference key="1">
    <citation type="journal article" date="2003" name="Science">
        <title>Genome of Geobacter sulfurreducens: metal reduction in subsurface environments.</title>
        <authorList>
            <person name="Methe B.A."/>
            <person name="Nelson K.E."/>
            <person name="Eisen J.A."/>
            <person name="Paulsen I.T."/>
            <person name="Nelson W.C."/>
            <person name="Heidelberg J.F."/>
            <person name="Wu D."/>
            <person name="Wu M."/>
            <person name="Ward N.L."/>
            <person name="Beanan M.J."/>
            <person name="Dodson R.J."/>
            <person name="Madupu R."/>
            <person name="Brinkac L.M."/>
            <person name="Daugherty S.C."/>
            <person name="DeBoy R.T."/>
            <person name="Durkin A.S."/>
            <person name="Gwinn M.L."/>
            <person name="Kolonay J.F."/>
            <person name="Sullivan S.A."/>
            <person name="Haft D.H."/>
            <person name="Selengut J."/>
            <person name="Davidsen T.M."/>
            <person name="Zafar N."/>
            <person name="White O."/>
            <person name="Tran B."/>
            <person name="Romero C."/>
            <person name="Forberger H.A."/>
            <person name="Weidman J.F."/>
            <person name="Khouri H.M."/>
            <person name="Feldblyum T.V."/>
            <person name="Utterback T.R."/>
            <person name="Van Aken S.E."/>
            <person name="Lovley D.R."/>
            <person name="Fraser C.M."/>
        </authorList>
    </citation>
    <scope>NUCLEOTIDE SEQUENCE [LARGE SCALE GENOMIC DNA]</scope>
    <source>
        <strain>ATCC 51573 / DSM 12127 / PCA</strain>
    </source>
</reference>
<gene>
    <name evidence="1" type="primary">coaD</name>
    <name type="ordered locus">GSU1243</name>
</gene>
<sequence>MPTKIAVYPGSFDPITYGHLDIIDRALRIFDQVIVAVARNSAKSALFTTDERVDMIQRVLADNVRARVDTFDGLLIDYVLSQKATVIIRGLRAISDFEYEFQIAQMNRSISQDVETLFMMTSVPYGYLSSSIVKEVSSLNGPIDGLVPPLVRQALRDKFAGPDR</sequence>
<keyword id="KW-0067">ATP-binding</keyword>
<keyword id="KW-0173">Coenzyme A biosynthesis</keyword>
<keyword id="KW-0963">Cytoplasm</keyword>
<keyword id="KW-0460">Magnesium</keyword>
<keyword id="KW-0547">Nucleotide-binding</keyword>
<keyword id="KW-0548">Nucleotidyltransferase</keyword>
<keyword id="KW-1185">Reference proteome</keyword>
<keyword id="KW-0808">Transferase</keyword>
<name>COAD_GEOSL</name>
<dbReference type="EC" id="2.7.7.3" evidence="1"/>
<dbReference type="EMBL" id="AE017180">
    <property type="protein sequence ID" value="AAR34619.1"/>
    <property type="molecule type" value="Genomic_DNA"/>
</dbReference>
<dbReference type="RefSeq" id="NP_952296.1">
    <property type="nucleotide sequence ID" value="NC_002939.5"/>
</dbReference>
<dbReference type="RefSeq" id="WP_010941899.1">
    <property type="nucleotide sequence ID" value="NC_002939.5"/>
</dbReference>
<dbReference type="SMR" id="Q74DS2"/>
<dbReference type="FunCoup" id="Q74DS2">
    <property type="interactions" value="487"/>
</dbReference>
<dbReference type="STRING" id="243231.GSU1243"/>
<dbReference type="EnsemblBacteria" id="AAR34619">
    <property type="protein sequence ID" value="AAR34619"/>
    <property type="gene ID" value="GSU1243"/>
</dbReference>
<dbReference type="KEGG" id="gsu:GSU1243"/>
<dbReference type="PATRIC" id="fig|243231.5.peg.1238"/>
<dbReference type="eggNOG" id="COG0669">
    <property type="taxonomic scope" value="Bacteria"/>
</dbReference>
<dbReference type="HOGENOM" id="CLU_100149_0_1_7"/>
<dbReference type="InParanoid" id="Q74DS2"/>
<dbReference type="OrthoDB" id="9806661at2"/>
<dbReference type="UniPathway" id="UPA00241">
    <property type="reaction ID" value="UER00355"/>
</dbReference>
<dbReference type="Proteomes" id="UP000000577">
    <property type="component" value="Chromosome"/>
</dbReference>
<dbReference type="GO" id="GO:0005737">
    <property type="term" value="C:cytoplasm"/>
    <property type="evidence" value="ECO:0007669"/>
    <property type="project" value="UniProtKB-SubCell"/>
</dbReference>
<dbReference type="GO" id="GO:0005524">
    <property type="term" value="F:ATP binding"/>
    <property type="evidence" value="ECO:0007669"/>
    <property type="project" value="UniProtKB-KW"/>
</dbReference>
<dbReference type="GO" id="GO:0004595">
    <property type="term" value="F:pantetheine-phosphate adenylyltransferase activity"/>
    <property type="evidence" value="ECO:0000318"/>
    <property type="project" value="GO_Central"/>
</dbReference>
<dbReference type="GO" id="GO:0015937">
    <property type="term" value="P:coenzyme A biosynthetic process"/>
    <property type="evidence" value="ECO:0000318"/>
    <property type="project" value="GO_Central"/>
</dbReference>
<dbReference type="CDD" id="cd02163">
    <property type="entry name" value="PPAT"/>
    <property type="match status" value="1"/>
</dbReference>
<dbReference type="Gene3D" id="3.40.50.620">
    <property type="entry name" value="HUPs"/>
    <property type="match status" value="1"/>
</dbReference>
<dbReference type="HAMAP" id="MF_00151">
    <property type="entry name" value="PPAT_bact"/>
    <property type="match status" value="1"/>
</dbReference>
<dbReference type="InterPro" id="IPR004821">
    <property type="entry name" value="Cyt_trans-like"/>
</dbReference>
<dbReference type="InterPro" id="IPR001980">
    <property type="entry name" value="PPAT"/>
</dbReference>
<dbReference type="InterPro" id="IPR014729">
    <property type="entry name" value="Rossmann-like_a/b/a_fold"/>
</dbReference>
<dbReference type="NCBIfam" id="TIGR01510">
    <property type="entry name" value="coaD_prev_kdtB"/>
    <property type="match status" value="1"/>
</dbReference>
<dbReference type="NCBIfam" id="TIGR00125">
    <property type="entry name" value="cyt_tran_rel"/>
    <property type="match status" value="1"/>
</dbReference>
<dbReference type="PANTHER" id="PTHR21342">
    <property type="entry name" value="PHOSPHOPANTETHEINE ADENYLYLTRANSFERASE"/>
    <property type="match status" value="1"/>
</dbReference>
<dbReference type="PANTHER" id="PTHR21342:SF1">
    <property type="entry name" value="PHOSPHOPANTETHEINE ADENYLYLTRANSFERASE"/>
    <property type="match status" value="1"/>
</dbReference>
<dbReference type="Pfam" id="PF01467">
    <property type="entry name" value="CTP_transf_like"/>
    <property type="match status" value="1"/>
</dbReference>
<dbReference type="PRINTS" id="PR01020">
    <property type="entry name" value="LPSBIOSNTHSS"/>
</dbReference>
<dbReference type="SUPFAM" id="SSF52374">
    <property type="entry name" value="Nucleotidylyl transferase"/>
    <property type="match status" value="1"/>
</dbReference>
<protein>
    <recommendedName>
        <fullName evidence="1">Phosphopantetheine adenylyltransferase</fullName>
        <ecNumber evidence="1">2.7.7.3</ecNumber>
    </recommendedName>
    <alternativeName>
        <fullName evidence="1">Dephospho-CoA pyrophosphorylase</fullName>
    </alternativeName>
    <alternativeName>
        <fullName evidence="1">Pantetheine-phosphate adenylyltransferase</fullName>
        <shortName evidence="1">PPAT</shortName>
    </alternativeName>
</protein>
<accession>Q74DS2</accession>
<proteinExistence type="inferred from homology"/>